<proteinExistence type="evidence at protein level"/>
<gene>
    <name type="primary">Fam13a</name>
    <name type="synonym">Fam13a1</name>
    <name type="synonym">Precm1</name>
</gene>
<organism>
    <name type="scientific">Mus musculus</name>
    <name type="common">Mouse</name>
    <dbReference type="NCBI Taxonomy" id="10090"/>
    <lineage>
        <taxon>Eukaryota</taxon>
        <taxon>Metazoa</taxon>
        <taxon>Chordata</taxon>
        <taxon>Craniata</taxon>
        <taxon>Vertebrata</taxon>
        <taxon>Euteleostomi</taxon>
        <taxon>Mammalia</taxon>
        <taxon>Eutheria</taxon>
        <taxon>Euarchontoglires</taxon>
        <taxon>Glires</taxon>
        <taxon>Rodentia</taxon>
        <taxon>Myomorpha</taxon>
        <taxon>Muroidea</taxon>
        <taxon>Muridae</taxon>
        <taxon>Murinae</taxon>
        <taxon>Mus</taxon>
        <taxon>Mus</taxon>
    </lineage>
</organism>
<reference key="1">
    <citation type="journal article" date="2004" name="Genomics">
        <title>Cloning and characterization of FAM13A1--a gene near a milk protein QTL on BTA6: evidence for population-wide linkage disequilibrium in Israeli Holsteins.</title>
        <authorList>
            <person name="Cohen M."/>
            <person name="Reichenstein M."/>
            <person name="Everts-van der Wind A."/>
            <person name="Heon-Lee J."/>
            <person name="Shani M."/>
            <person name="Lewin H.A."/>
            <person name="Weller J.I."/>
            <person name="Ron M."/>
            <person name="Seroussi E."/>
        </authorList>
    </citation>
    <scope>NUCLEOTIDE SEQUENCE [MRNA]</scope>
    <scope>TISSUE SPECIFICITY</scope>
    <source>
        <strain>FVB/N</strain>
    </source>
</reference>
<reference key="2">
    <citation type="journal article" date="2005" name="Science">
        <title>The transcriptional landscape of the mammalian genome.</title>
        <authorList>
            <person name="Carninci P."/>
            <person name="Kasukawa T."/>
            <person name="Katayama S."/>
            <person name="Gough J."/>
            <person name="Frith M.C."/>
            <person name="Maeda N."/>
            <person name="Oyama R."/>
            <person name="Ravasi T."/>
            <person name="Lenhard B."/>
            <person name="Wells C."/>
            <person name="Kodzius R."/>
            <person name="Shimokawa K."/>
            <person name="Bajic V.B."/>
            <person name="Brenner S.E."/>
            <person name="Batalov S."/>
            <person name="Forrest A.R."/>
            <person name="Zavolan M."/>
            <person name="Davis M.J."/>
            <person name="Wilming L.G."/>
            <person name="Aidinis V."/>
            <person name="Allen J.E."/>
            <person name="Ambesi-Impiombato A."/>
            <person name="Apweiler R."/>
            <person name="Aturaliya R.N."/>
            <person name="Bailey T.L."/>
            <person name="Bansal M."/>
            <person name="Baxter L."/>
            <person name="Beisel K.W."/>
            <person name="Bersano T."/>
            <person name="Bono H."/>
            <person name="Chalk A.M."/>
            <person name="Chiu K.P."/>
            <person name="Choudhary V."/>
            <person name="Christoffels A."/>
            <person name="Clutterbuck D.R."/>
            <person name="Crowe M.L."/>
            <person name="Dalla E."/>
            <person name="Dalrymple B.P."/>
            <person name="de Bono B."/>
            <person name="Della Gatta G."/>
            <person name="di Bernardo D."/>
            <person name="Down T."/>
            <person name="Engstrom P."/>
            <person name="Fagiolini M."/>
            <person name="Faulkner G."/>
            <person name="Fletcher C.F."/>
            <person name="Fukushima T."/>
            <person name="Furuno M."/>
            <person name="Futaki S."/>
            <person name="Gariboldi M."/>
            <person name="Georgii-Hemming P."/>
            <person name="Gingeras T.R."/>
            <person name="Gojobori T."/>
            <person name="Green R.E."/>
            <person name="Gustincich S."/>
            <person name="Harbers M."/>
            <person name="Hayashi Y."/>
            <person name="Hensch T.K."/>
            <person name="Hirokawa N."/>
            <person name="Hill D."/>
            <person name="Huminiecki L."/>
            <person name="Iacono M."/>
            <person name="Ikeo K."/>
            <person name="Iwama A."/>
            <person name="Ishikawa T."/>
            <person name="Jakt M."/>
            <person name="Kanapin A."/>
            <person name="Katoh M."/>
            <person name="Kawasawa Y."/>
            <person name="Kelso J."/>
            <person name="Kitamura H."/>
            <person name="Kitano H."/>
            <person name="Kollias G."/>
            <person name="Krishnan S.P."/>
            <person name="Kruger A."/>
            <person name="Kummerfeld S.K."/>
            <person name="Kurochkin I.V."/>
            <person name="Lareau L.F."/>
            <person name="Lazarevic D."/>
            <person name="Lipovich L."/>
            <person name="Liu J."/>
            <person name="Liuni S."/>
            <person name="McWilliam S."/>
            <person name="Madan Babu M."/>
            <person name="Madera M."/>
            <person name="Marchionni L."/>
            <person name="Matsuda H."/>
            <person name="Matsuzawa S."/>
            <person name="Miki H."/>
            <person name="Mignone F."/>
            <person name="Miyake S."/>
            <person name="Morris K."/>
            <person name="Mottagui-Tabar S."/>
            <person name="Mulder N."/>
            <person name="Nakano N."/>
            <person name="Nakauchi H."/>
            <person name="Ng P."/>
            <person name="Nilsson R."/>
            <person name="Nishiguchi S."/>
            <person name="Nishikawa S."/>
            <person name="Nori F."/>
            <person name="Ohara O."/>
            <person name="Okazaki Y."/>
            <person name="Orlando V."/>
            <person name="Pang K.C."/>
            <person name="Pavan W.J."/>
            <person name="Pavesi G."/>
            <person name="Pesole G."/>
            <person name="Petrovsky N."/>
            <person name="Piazza S."/>
            <person name="Reed J."/>
            <person name="Reid J.F."/>
            <person name="Ring B.Z."/>
            <person name="Ringwald M."/>
            <person name="Rost B."/>
            <person name="Ruan Y."/>
            <person name="Salzberg S.L."/>
            <person name="Sandelin A."/>
            <person name="Schneider C."/>
            <person name="Schoenbach C."/>
            <person name="Sekiguchi K."/>
            <person name="Semple C.A."/>
            <person name="Seno S."/>
            <person name="Sessa L."/>
            <person name="Sheng Y."/>
            <person name="Shibata Y."/>
            <person name="Shimada H."/>
            <person name="Shimada K."/>
            <person name="Silva D."/>
            <person name="Sinclair B."/>
            <person name="Sperling S."/>
            <person name="Stupka E."/>
            <person name="Sugiura K."/>
            <person name="Sultana R."/>
            <person name="Takenaka Y."/>
            <person name="Taki K."/>
            <person name="Tammoja K."/>
            <person name="Tan S.L."/>
            <person name="Tang S."/>
            <person name="Taylor M.S."/>
            <person name="Tegner J."/>
            <person name="Teichmann S.A."/>
            <person name="Ueda H.R."/>
            <person name="van Nimwegen E."/>
            <person name="Verardo R."/>
            <person name="Wei C.L."/>
            <person name="Yagi K."/>
            <person name="Yamanishi H."/>
            <person name="Zabarovsky E."/>
            <person name="Zhu S."/>
            <person name="Zimmer A."/>
            <person name="Hide W."/>
            <person name="Bult C."/>
            <person name="Grimmond S.M."/>
            <person name="Teasdale R.D."/>
            <person name="Liu E.T."/>
            <person name="Brusic V."/>
            <person name="Quackenbush J."/>
            <person name="Wahlestedt C."/>
            <person name="Mattick J.S."/>
            <person name="Hume D.A."/>
            <person name="Kai C."/>
            <person name="Sasaki D."/>
            <person name="Tomaru Y."/>
            <person name="Fukuda S."/>
            <person name="Kanamori-Katayama M."/>
            <person name="Suzuki M."/>
            <person name="Aoki J."/>
            <person name="Arakawa T."/>
            <person name="Iida J."/>
            <person name="Imamura K."/>
            <person name="Itoh M."/>
            <person name="Kato T."/>
            <person name="Kawaji H."/>
            <person name="Kawagashira N."/>
            <person name="Kawashima T."/>
            <person name="Kojima M."/>
            <person name="Kondo S."/>
            <person name="Konno H."/>
            <person name="Nakano K."/>
            <person name="Ninomiya N."/>
            <person name="Nishio T."/>
            <person name="Okada M."/>
            <person name="Plessy C."/>
            <person name="Shibata K."/>
            <person name="Shiraki T."/>
            <person name="Suzuki S."/>
            <person name="Tagami M."/>
            <person name="Waki K."/>
            <person name="Watahiki A."/>
            <person name="Okamura-Oho Y."/>
            <person name="Suzuki H."/>
            <person name="Kawai J."/>
            <person name="Hayashizaki Y."/>
        </authorList>
    </citation>
    <scope>NUCLEOTIDE SEQUENCE [LARGE SCALE MRNA]</scope>
    <source>
        <strain>C57BL/6J</strain>
        <tissue>Lung</tissue>
    </source>
</reference>
<reference key="3">
    <citation type="journal article" date="2004" name="Genome Res.">
        <title>The status, quality, and expansion of the NIH full-length cDNA project: the Mammalian Gene Collection (MGC).</title>
        <authorList>
            <consortium name="The MGC Project Team"/>
        </authorList>
    </citation>
    <scope>NUCLEOTIDE SEQUENCE [LARGE SCALE MRNA]</scope>
    <source>
        <strain>C57BL/6J</strain>
        <tissue>Brain</tissue>
    </source>
</reference>
<reference key="4">
    <citation type="journal article" date="2010" name="Cell">
        <title>A tissue-specific atlas of mouse protein phosphorylation and expression.</title>
        <authorList>
            <person name="Huttlin E.L."/>
            <person name="Jedrychowski M.P."/>
            <person name="Elias J.E."/>
            <person name="Goswami T."/>
            <person name="Rad R."/>
            <person name="Beausoleil S.A."/>
            <person name="Villen J."/>
            <person name="Haas W."/>
            <person name="Sowa M.E."/>
            <person name="Gygi S.P."/>
        </authorList>
    </citation>
    <scope>PHOSPHORYLATION [LARGE SCALE ANALYSIS] AT SER-19; SER-267; SER-287 AND SER-397</scope>
    <scope>IDENTIFICATION BY MASS SPECTROMETRY [LARGE SCALE ANALYSIS]</scope>
    <source>
        <tissue>Brown adipose tissue</tissue>
        <tissue>Kidney</tissue>
        <tissue>Lung</tissue>
        <tissue>Pancreas</tissue>
    </source>
</reference>
<reference key="5">
    <citation type="journal article" date="2015" name="J. Immunol.">
        <title>Annexin A2 Regulates Autophagy in Pseudomonas aeruginosa Infection through the Akt1-mTOR-ULK1/2 Signaling Pathway.</title>
        <authorList>
            <person name="Li R."/>
            <person name="Tan S."/>
            <person name="Yu M."/>
            <person name="Jundt M.C."/>
            <person name="Zhang S."/>
            <person name="Wu M."/>
        </authorList>
    </citation>
    <scope>FUNCTION (MICROBIAL INFECTION)</scope>
    <scope>INTERACTION WITH ANXA2</scope>
    <scope>INDUCTION (MICROBIAL INFECTION)</scope>
</reference>
<feature type="chain" id="PRO_0000058921" description="Protein FAM13A">
    <location>
        <begin position="1"/>
        <end position="693"/>
    </location>
</feature>
<feature type="region of interest" description="Disordered" evidence="2">
    <location>
        <begin position="56"/>
        <end position="89"/>
    </location>
</feature>
<feature type="region of interest" description="Disordered" evidence="2">
    <location>
        <begin position="136"/>
        <end position="233"/>
    </location>
</feature>
<feature type="region of interest" description="Disordered" evidence="2">
    <location>
        <begin position="302"/>
        <end position="331"/>
    </location>
</feature>
<feature type="region of interest" description="Disordered" evidence="2">
    <location>
        <begin position="396"/>
        <end position="424"/>
    </location>
</feature>
<feature type="compositionally biased region" description="Polar residues" evidence="2">
    <location>
        <begin position="69"/>
        <end position="78"/>
    </location>
</feature>
<feature type="compositionally biased region" description="Low complexity" evidence="2">
    <location>
        <begin position="159"/>
        <end position="171"/>
    </location>
</feature>
<feature type="compositionally biased region" description="Basic and acidic residues" evidence="2">
    <location>
        <begin position="184"/>
        <end position="197"/>
    </location>
</feature>
<feature type="compositionally biased region" description="Polar residues" evidence="2">
    <location>
        <begin position="408"/>
        <end position="418"/>
    </location>
</feature>
<feature type="modified residue" description="Phosphoserine" evidence="6">
    <location>
        <position position="19"/>
    </location>
</feature>
<feature type="modified residue" description="Phosphoserine" evidence="6">
    <location>
        <position position="267"/>
    </location>
</feature>
<feature type="modified residue" description="Phosphoserine" evidence="6">
    <location>
        <position position="287"/>
    </location>
</feature>
<feature type="modified residue" description="Phosphoserine" evidence="6">
    <location>
        <position position="397"/>
    </location>
</feature>
<feature type="modified residue" description="Phosphothreonine" evidence="1">
    <location>
        <position position="402"/>
    </location>
</feature>
<protein>
    <recommendedName>
        <fullName>Protein FAM13A</fullName>
    </recommendedName>
    <alternativeName>
        <fullName>Precm1 protein</fullName>
    </alternativeName>
</protein>
<evidence type="ECO:0000250" key="1">
    <source>
        <dbReference type="UniProtKB" id="O94988"/>
    </source>
</evidence>
<evidence type="ECO:0000256" key="2">
    <source>
        <dbReference type="SAM" id="MobiDB-lite"/>
    </source>
</evidence>
<evidence type="ECO:0000269" key="3">
    <source>
    </source>
</evidence>
<evidence type="ECO:0000269" key="4">
    <source>
    </source>
</evidence>
<evidence type="ECO:0000305" key="5"/>
<evidence type="ECO:0007744" key="6">
    <source>
    </source>
</evidence>
<name>FA13A_MOUSE</name>
<keyword id="KW-0597">Phosphoprotein</keyword>
<keyword id="KW-1185">Reference proteome</keyword>
<sequence length="693" mass="79424">MACEIMPLRSSQEDERPLSPFYLSAHVSQVSNVSTTGELLERTIRSAVEEHLFDVSNAGDQSSEDSEPGPSSASSIPTRQRGHQFKKQDDVWHGCDKELINKENIPSGFSGCAECILNSQEAERFQDDICDYVGERSKPKRQKSSSRLAKLSDNHDGALSMESLSSMQSQETLEPEAAEPLSSESKEIERGGRDTQHCENPTMKIQEHPSLSDTKQQRNQDGEDQQESFVPDMPQLDLTALCDEKTWEEPIPSWQPENADSDEARLSPQAGRLIHQFLDEDSDPMLSPRFYAYGQSRQYLDDTEVPPSPPNSHSFMRRRSSSLGSYDDEQEDLTPVQLTRRIQTLKKKIRKFEDRFEEERKYRPSHSDKAANPEVLKWTNDLAKFRKQLKESKLKISEEDLTPRTRQRSNTLPKSFGSQLEKEDEKKQELLDKAIRPSVEATLEGILRKLQEKRVESSRPEDIKDMTKDQIANEKVALQKALLYYESIHGRPVTKTERQIMKPLYDRYRLVKQILSRASTVPIIGSPSSKRRSPSLQPIIEGETASFFKEIKEQEEGSEDDSSTKPDFAVTLKTDCSAHCFLDQLEDDADGFISPMDDKMPSKCSQDSGLSNLHSASIPELLEYLQEMREEKKMIRKKLHDFEDNFFRQNGRNVQKEDRTPMAEEYNEYKHIKAKLRLLEVLISKRDSDSKSM</sequence>
<comment type="function">
    <text evidence="4">(Microbial infection) Plays a role in the clearance of Pseudomonas aeruginosa by macrophages (PubMed:26371245). In complex with ANXA2, promotes activation of Rho GTPases following P.aeruginosa infection (PubMed:26371245).</text>
</comment>
<comment type="subunit">
    <text evidence="4">Interacts with ANXA2.</text>
</comment>
<comment type="tissue specificity">
    <text evidence="3">Expressed in the mammary gland, with similar levels at all stages of development, including pregnancy, lactation and involution.</text>
</comment>
<comment type="induction">
    <text evidence="4">Up-regulated in alveolar macrophages following Pseudomonas aeruginosa infection.</text>
</comment>
<comment type="similarity">
    <text evidence="5">Belongs to the FAM13 family.</text>
</comment>
<accession>Q8BGI4</accession>
<accession>Q8BZ91</accession>
<dbReference type="EMBL" id="AJ510136">
    <property type="protein sequence ID" value="CAD52865.1"/>
    <property type="molecule type" value="mRNA"/>
</dbReference>
<dbReference type="EMBL" id="AK036291">
    <property type="protein sequence ID" value="BAC29374.1"/>
    <property type="molecule type" value="mRNA"/>
</dbReference>
<dbReference type="EMBL" id="AK052421">
    <property type="protein sequence ID" value="BAC34983.1"/>
    <property type="molecule type" value="mRNA"/>
</dbReference>
<dbReference type="EMBL" id="BC080861">
    <property type="protein sequence ID" value="AAH80861.1"/>
    <property type="molecule type" value="mRNA"/>
</dbReference>
<dbReference type="CCDS" id="CCDS39499.1"/>
<dbReference type="RefSeq" id="NP_705802.1">
    <property type="nucleotide sequence ID" value="NM_153574.2"/>
</dbReference>
<dbReference type="SMR" id="Q8BGI4"/>
<dbReference type="FunCoup" id="Q8BGI4">
    <property type="interactions" value="91"/>
</dbReference>
<dbReference type="STRING" id="10090.ENSMUSP00000087304"/>
<dbReference type="iPTMnet" id="Q8BGI4"/>
<dbReference type="PhosphoSitePlus" id="Q8BGI4"/>
<dbReference type="jPOST" id="Q8BGI4"/>
<dbReference type="PaxDb" id="10090-ENSMUSP00000087304"/>
<dbReference type="ProteomicsDB" id="275578"/>
<dbReference type="Antibodypedia" id="52083">
    <property type="antibodies" value="46 antibodies from 19 providers"/>
</dbReference>
<dbReference type="Ensembl" id="ENSMUST00000089860.12">
    <property type="protein sequence ID" value="ENSMUSP00000087304.6"/>
    <property type="gene ID" value="ENSMUSG00000037709.14"/>
</dbReference>
<dbReference type="GeneID" id="58909"/>
<dbReference type="KEGG" id="mmu:58909"/>
<dbReference type="UCSC" id="uc009cdi.1">
    <property type="organism name" value="mouse"/>
</dbReference>
<dbReference type="AGR" id="MGI:1889842"/>
<dbReference type="CTD" id="10144"/>
<dbReference type="MGI" id="MGI:1889842">
    <property type="gene designation" value="Fam13a"/>
</dbReference>
<dbReference type="VEuPathDB" id="HostDB:ENSMUSG00000037709"/>
<dbReference type="eggNOG" id="KOG4270">
    <property type="taxonomic scope" value="Eukaryota"/>
</dbReference>
<dbReference type="GeneTree" id="ENSGT00950000183033"/>
<dbReference type="HOGENOM" id="CLU_012606_1_0_1"/>
<dbReference type="InParanoid" id="Q8BGI4"/>
<dbReference type="OMA" id="GQSQQFL"/>
<dbReference type="OrthoDB" id="185175at2759"/>
<dbReference type="PhylomeDB" id="Q8BGI4"/>
<dbReference type="TreeFam" id="TF328895"/>
<dbReference type="Reactome" id="R-MMU-8980692">
    <property type="pathway name" value="RHOA GTPase cycle"/>
</dbReference>
<dbReference type="Reactome" id="R-MMU-9013149">
    <property type="pathway name" value="RAC1 GTPase cycle"/>
</dbReference>
<dbReference type="BioGRID-ORCS" id="58909">
    <property type="hits" value="0 hits in 75 CRISPR screens"/>
</dbReference>
<dbReference type="ChiTaRS" id="Fam13a">
    <property type="organism name" value="mouse"/>
</dbReference>
<dbReference type="PRO" id="PR:Q8BGI4"/>
<dbReference type="Proteomes" id="UP000000589">
    <property type="component" value="Chromosome 6"/>
</dbReference>
<dbReference type="RNAct" id="Q8BGI4">
    <property type="molecule type" value="protein"/>
</dbReference>
<dbReference type="Bgee" id="ENSMUSG00000037709">
    <property type="expression patterns" value="Expressed in pigmented layer of retina and 209 other cell types or tissues"/>
</dbReference>
<dbReference type="ExpressionAtlas" id="Q8BGI4">
    <property type="expression patterns" value="baseline and differential"/>
</dbReference>
<dbReference type="InterPro" id="IPR039102">
    <property type="entry name" value="FAM13"/>
</dbReference>
<dbReference type="PANTHER" id="PTHR15904">
    <property type="entry name" value="FAM13"/>
    <property type="match status" value="1"/>
</dbReference>
<dbReference type="PANTHER" id="PTHR15904:SF18">
    <property type="entry name" value="PROTEIN FAM13A"/>
    <property type="match status" value="1"/>
</dbReference>